<keyword id="KW-0007">Acetylation</keyword>
<keyword id="KW-0049">Antioxidant</keyword>
<keyword id="KW-0963">Cytoplasm</keyword>
<keyword id="KW-0903">Direct protein sequencing</keyword>
<keyword id="KW-1015">Disulfide bond</keyword>
<keyword id="KW-1017">Isopeptide bond</keyword>
<keyword id="KW-0560">Oxidoreductase</keyword>
<keyword id="KW-0575">Peroxidase</keyword>
<keyword id="KW-0597">Phosphoprotein</keyword>
<keyword id="KW-0676">Redox-active center</keyword>
<keyword id="KW-1185">Reference proteome</keyword>
<keyword id="KW-0832">Ubl conjugation</keyword>
<gene>
    <name type="primary">PRDX1</name>
    <name type="synonym">PAG</name>
</gene>
<comment type="function">
    <text evidence="1 3">Thiol-specific peroxidase that catalyzes the reduction of hydrogen peroxide and organic hydroperoxides to water and alcohols, respectively. Plays a role in cell protection against oxidative stress by detoxifying peroxides and as sensor of hydrogen peroxide-mediated signaling events. Might participate in the signaling cascades of growth factors and tumor necrosis factor-alpha by regulating the intracellular concentrations of H(2)O(2) (By similarity). Reduces an intramolecular disulfide bond in GDPD5 that gates the ability to GDPD5 to drive postmitotic motor neuron differentiation (By similarity).</text>
</comment>
<comment type="catalytic activity">
    <reaction evidence="3">
        <text>a hydroperoxide + [thioredoxin]-dithiol = an alcohol + [thioredoxin]-disulfide + H2O</text>
        <dbReference type="Rhea" id="RHEA:62620"/>
        <dbReference type="Rhea" id="RHEA-COMP:10698"/>
        <dbReference type="Rhea" id="RHEA-COMP:10700"/>
        <dbReference type="ChEBI" id="CHEBI:15377"/>
        <dbReference type="ChEBI" id="CHEBI:29950"/>
        <dbReference type="ChEBI" id="CHEBI:30879"/>
        <dbReference type="ChEBI" id="CHEBI:35924"/>
        <dbReference type="ChEBI" id="CHEBI:50058"/>
        <dbReference type="EC" id="1.11.1.24"/>
    </reaction>
</comment>
<comment type="subunit">
    <text evidence="1 3">Homodimer; disulfide-linked, upon oxidation. 5 homodimers assemble to form a ring-like decamer (By similarity). Interacts with GDPD5; forms a mixed-disulfide with GDPD5 (By similarity). Interacts with SESN1 and SESN2 (By similarity). Interacts with FAM107A (By similarity).</text>
</comment>
<comment type="subcellular location">
    <subcellularLocation>
        <location evidence="3">Cytoplasm</location>
    </subcellularLocation>
</comment>
<comment type="tissue specificity">
    <text evidence="6">Detected in heart and skeletal muscle (at protein level).</text>
</comment>
<comment type="induction">
    <text evidence="6">Up-regulated in hearts from hiberbating bats.</text>
</comment>
<comment type="PTM">
    <text evidence="3">Phosphorylated on Thr-90 during the M-phase, which leads to a decrease in enzymatic activity.</text>
</comment>
<comment type="PTM">
    <text evidence="3">Acetylation increases reducing activity and resistance to superoxidation. Deacetylated by HDAC6 which decreases reducing activity.</text>
</comment>
<comment type="miscellaneous">
    <text evidence="3">The active site is a conserved redox-active cysteine residue, the peroxidatic cysteine (C(P)), which makes the nucleophilic attack on the peroxide substrate. The peroxide oxidizes the C(P)-SH to cysteine sulfenic acid (C(P)-SOH), which then reacts with another cysteine residue, the resolving cysteine (C(R)), to form a disulfide bridge. The disulfide is subsequently reduced by an appropriate electron donor to complete the catalytic cycle. In this typical 2-Cys peroxiredoxin, C(R) is provided by the other dimeric subunit to form an intersubunit disulfide. The disulfide is subsequently reduced by thioredoxin.</text>
</comment>
<comment type="similarity">
    <text evidence="7">Belongs to the peroxiredoxin family. AhpC/Prx1 subfamily.</text>
</comment>
<organism>
    <name type="scientific">Myotis lucifugus</name>
    <name type="common">Little brown bat</name>
    <dbReference type="NCBI Taxonomy" id="59463"/>
    <lineage>
        <taxon>Eukaryota</taxon>
        <taxon>Metazoa</taxon>
        <taxon>Chordata</taxon>
        <taxon>Craniata</taxon>
        <taxon>Vertebrata</taxon>
        <taxon>Euteleostomi</taxon>
        <taxon>Mammalia</taxon>
        <taxon>Eutheria</taxon>
        <taxon>Laurasiatheria</taxon>
        <taxon>Chiroptera</taxon>
        <taxon>Yangochiroptera</taxon>
        <taxon>Vespertilionidae</taxon>
        <taxon>Myotis</taxon>
    </lineage>
</organism>
<protein>
    <recommendedName>
        <fullName>Peroxiredoxin-1</fullName>
        <ecNumber evidence="3">1.11.1.24</ecNumber>
    </recommendedName>
    <alternativeName>
        <fullName evidence="7">Thioredoxin-dependent peroxiredoxin 1</fullName>
    </alternativeName>
</protein>
<feature type="initiator methionine" description="Removed" evidence="3">
    <location>
        <position position="1"/>
    </location>
</feature>
<feature type="chain" id="PRO_0000256853" description="Peroxiredoxin-1">
    <location>
        <begin position="2"/>
        <end position="199"/>
    </location>
</feature>
<feature type="domain" description="Thioredoxin" evidence="4">
    <location>
        <begin position="6"/>
        <end position="165"/>
    </location>
</feature>
<feature type="region of interest" description="Disordered" evidence="5">
    <location>
        <begin position="176"/>
        <end position="199"/>
    </location>
</feature>
<feature type="compositionally biased region" description="Basic and acidic residues" evidence="5">
    <location>
        <begin position="184"/>
        <end position="199"/>
    </location>
</feature>
<feature type="active site" description="Cysteine sulfenic acid (-SOH) intermediate" evidence="3">
    <location>
        <position position="52"/>
    </location>
</feature>
<feature type="modified residue" description="N-acetylserine" evidence="3">
    <location>
        <position position="2"/>
    </location>
</feature>
<feature type="modified residue" description="N6-acetyllysine; alternate" evidence="3">
    <location>
        <position position="7"/>
    </location>
</feature>
<feature type="modified residue" description="N6-acetyllysine" evidence="3">
    <location>
        <position position="16"/>
    </location>
</feature>
<feature type="modified residue" description="N6-acetyllysine" evidence="3">
    <location>
        <position position="27"/>
    </location>
</feature>
<feature type="modified residue" description="Phosphoserine" evidence="3">
    <location>
        <position position="32"/>
    </location>
</feature>
<feature type="modified residue" description="N6-acetyllysine; alternate" evidence="3">
    <location>
        <position position="35"/>
    </location>
</feature>
<feature type="modified residue" description="N6-succinyllysine; alternate" evidence="2">
    <location>
        <position position="35"/>
    </location>
</feature>
<feature type="modified residue" description="Phosphothreonine" evidence="3">
    <location>
        <position position="90"/>
    </location>
</feature>
<feature type="modified residue" description="N6-acetyllysine" evidence="2">
    <location>
        <position position="136"/>
    </location>
</feature>
<feature type="modified residue" description="N6-acetyllysine" evidence="3">
    <location>
        <position position="197"/>
    </location>
</feature>
<feature type="disulfide bond" description="Interchain (with C-173); in linked form" evidence="3">
    <location>
        <position position="52"/>
    </location>
</feature>
<feature type="disulfide bond" description="Interchain (with C-52); in linked form" evidence="3">
    <location>
        <position position="173"/>
    </location>
</feature>
<feature type="cross-link" description="Glycyl lysine isopeptide (Lys-Gly) (interchain with G-Cter in SUMO2); alternate" evidence="3">
    <location>
        <position position="7"/>
    </location>
</feature>
<feature type="cross-link" description="Glycyl lysine isopeptide (Lys-Gly) (interchain with G-Cter in SUMO2)" evidence="3">
    <location>
        <position position="120"/>
    </location>
</feature>
<feature type="cross-link" description="Glycyl lysine isopeptide (Lys-Gly) (interchain with G-Cter in SUMO1)" evidence="3">
    <location>
        <position position="185"/>
    </location>
</feature>
<evidence type="ECO:0000250" key="1">
    <source>
        <dbReference type="UniProtKB" id="P0CB50"/>
    </source>
</evidence>
<evidence type="ECO:0000250" key="2">
    <source>
        <dbReference type="UniProtKB" id="P35700"/>
    </source>
</evidence>
<evidence type="ECO:0000250" key="3">
    <source>
        <dbReference type="UniProtKB" id="Q06830"/>
    </source>
</evidence>
<evidence type="ECO:0000255" key="4">
    <source>
        <dbReference type="PROSITE-ProRule" id="PRU00691"/>
    </source>
</evidence>
<evidence type="ECO:0000256" key="5">
    <source>
        <dbReference type="SAM" id="MobiDB-lite"/>
    </source>
</evidence>
<evidence type="ECO:0000269" key="6">
    <source>
    </source>
</evidence>
<evidence type="ECO:0000305" key="7"/>
<reference key="1">
    <citation type="journal article" date="2005" name="Arch. Biochem. Biophys.">
        <title>Up-regulation of a thioredoxin peroxidase-like protein, proliferation-associated gene, in hibernating bats.</title>
        <authorList>
            <person name="Eddy S.F."/>
            <person name="McNally J.D."/>
            <person name="Storey K.B."/>
        </authorList>
    </citation>
    <scope>NUCLEOTIDE SEQUENCE [MRNA]</scope>
    <scope>PARTIAL PROTEIN SEQUENCE</scope>
    <scope>TISSUE SPECIFICITY</scope>
    <scope>INDUCTION</scope>
    <source>
        <tissue>Heart</tissue>
    </source>
</reference>
<dbReference type="EC" id="1.11.1.24" evidence="3"/>
<dbReference type="EMBL" id="AY680839">
    <property type="protein sequence ID" value="AAT79401.1"/>
    <property type="molecule type" value="mRNA"/>
</dbReference>
<dbReference type="RefSeq" id="NP_001273946.1">
    <property type="nucleotide sequence ID" value="NM_001287017.1"/>
</dbReference>
<dbReference type="RefSeq" id="XP_014319263.1">
    <property type="nucleotide sequence ID" value="XM_014463777.1"/>
</dbReference>
<dbReference type="RefSeq" id="XP_023617636.1">
    <property type="nucleotide sequence ID" value="XM_023761868.1"/>
</dbReference>
<dbReference type="SMR" id="Q6B4U9"/>
<dbReference type="FunCoup" id="Q6B4U9">
    <property type="interactions" value="1162"/>
</dbReference>
<dbReference type="STRING" id="59463.ENSMLUP00000005182"/>
<dbReference type="Ensembl" id="ENSMLUT00000005672.2">
    <property type="protein sequence ID" value="ENSMLUP00000005182.2"/>
    <property type="gene ID" value="ENSMLUG00000005673.2"/>
</dbReference>
<dbReference type="GeneID" id="102430863"/>
<dbReference type="KEGG" id="mlf:102430863"/>
<dbReference type="CTD" id="5052"/>
<dbReference type="eggNOG" id="KOG0852">
    <property type="taxonomic scope" value="Eukaryota"/>
</dbReference>
<dbReference type="GeneTree" id="ENSGT00940000154277"/>
<dbReference type="HOGENOM" id="CLU_042529_21_1_1"/>
<dbReference type="InParanoid" id="Q6B4U9"/>
<dbReference type="OMA" id="FWYPKDF"/>
<dbReference type="OrthoDB" id="185659at2759"/>
<dbReference type="TreeFam" id="TF105181"/>
<dbReference type="Proteomes" id="UP000001074">
    <property type="component" value="Unassembled WGS sequence"/>
</dbReference>
<dbReference type="GO" id="GO:0005829">
    <property type="term" value="C:cytosol"/>
    <property type="evidence" value="ECO:0007669"/>
    <property type="project" value="TreeGrafter"/>
</dbReference>
<dbReference type="GO" id="GO:0005634">
    <property type="term" value="C:nucleus"/>
    <property type="evidence" value="ECO:0007669"/>
    <property type="project" value="Ensembl"/>
</dbReference>
<dbReference type="GO" id="GO:0042802">
    <property type="term" value="F:identical protein binding"/>
    <property type="evidence" value="ECO:0007669"/>
    <property type="project" value="Ensembl"/>
</dbReference>
<dbReference type="GO" id="GO:0008379">
    <property type="term" value="F:thioredoxin peroxidase activity"/>
    <property type="evidence" value="ECO:0007669"/>
    <property type="project" value="Ensembl"/>
</dbReference>
<dbReference type="GO" id="GO:0007249">
    <property type="term" value="P:canonical NF-kappaB signal transduction"/>
    <property type="evidence" value="ECO:0007669"/>
    <property type="project" value="Ensembl"/>
</dbReference>
<dbReference type="GO" id="GO:0045454">
    <property type="term" value="P:cell redox homeostasis"/>
    <property type="evidence" value="ECO:0007669"/>
    <property type="project" value="TreeGrafter"/>
</dbReference>
<dbReference type="GO" id="GO:0034101">
    <property type="term" value="P:erythrocyte homeostasis"/>
    <property type="evidence" value="ECO:0007669"/>
    <property type="project" value="Ensembl"/>
</dbReference>
<dbReference type="GO" id="GO:0048144">
    <property type="term" value="P:fibroblast proliferation"/>
    <property type="evidence" value="ECO:0007669"/>
    <property type="project" value="Ensembl"/>
</dbReference>
<dbReference type="GO" id="GO:0042744">
    <property type="term" value="P:hydrogen peroxide catabolic process"/>
    <property type="evidence" value="ECO:0007669"/>
    <property type="project" value="Ensembl"/>
</dbReference>
<dbReference type="GO" id="GO:0030101">
    <property type="term" value="P:natural killer cell activation"/>
    <property type="evidence" value="ECO:0007669"/>
    <property type="project" value="Ensembl"/>
</dbReference>
<dbReference type="GO" id="GO:0042267">
    <property type="term" value="P:natural killer cell mediated cytotoxicity"/>
    <property type="evidence" value="ECO:0007669"/>
    <property type="project" value="Ensembl"/>
</dbReference>
<dbReference type="GO" id="GO:1901222">
    <property type="term" value="P:regulation of non-canonical NF-kappaB signal transduction"/>
    <property type="evidence" value="ECO:0007669"/>
    <property type="project" value="Ensembl"/>
</dbReference>
<dbReference type="GO" id="GO:0032872">
    <property type="term" value="P:regulation of stress-activated MAPK cascade"/>
    <property type="evidence" value="ECO:0007669"/>
    <property type="project" value="Ensembl"/>
</dbReference>
<dbReference type="GO" id="GO:0019430">
    <property type="term" value="P:removal of superoxide radicals"/>
    <property type="evidence" value="ECO:0007669"/>
    <property type="project" value="Ensembl"/>
</dbReference>
<dbReference type="CDD" id="cd03015">
    <property type="entry name" value="PRX_Typ2cys"/>
    <property type="match status" value="1"/>
</dbReference>
<dbReference type="FunFam" id="3.40.30.10:FF:000529">
    <property type="entry name" value="Peroxiredoxin 1"/>
    <property type="match status" value="1"/>
</dbReference>
<dbReference type="Gene3D" id="3.40.30.10">
    <property type="entry name" value="Glutaredoxin"/>
    <property type="match status" value="1"/>
</dbReference>
<dbReference type="InterPro" id="IPR000866">
    <property type="entry name" value="AhpC/TSA"/>
</dbReference>
<dbReference type="InterPro" id="IPR050217">
    <property type="entry name" value="Peroxiredoxin"/>
</dbReference>
<dbReference type="InterPro" id="IPR024706">
    <property type="entry name" value="Peroxiredoxin_AhpC-typ"/>
</dbReference>
<dbReference type="InterPro" id="IPR019479">
    <property type="entry name" value="Peroxiredoxin_C"/>
</dbReference>
<dbReference type="InterPro" id="IPR036249">
    <property type="entry name" value="Thioredoxin-like_sf"/>
</dbReference>
<dbReference type="InterPro" id="IPR013766">
    <property type="entry name" value="Thioredoxin_domain"/>
</dbReference>
<dbReference type="PANTHER" id="PTHR10681:SF111">
    <property type="entry name" value="PEROXIREDOXIN-1"/>
    <property type="match status" value="1"/>
</dbReference>
<dbReference type="PANTHER" id="PTHR10681">
    <property type="entry name" value="THIOREDOXIN PEROXIDASE"/>
    <property type="match status" value="1"/>
</dbReference>
<dbReference type="Pfam" id="PF10417">
    <property type="entry name" value="1-cysPrx_C"/>
    <property type="match status" value="1"/>
</dbReference>
<dbReference type="Pfam" id="PF00578">
    <property type="entry name" value="AhpC-TSA"/>
    <property type="match status" value="1"/>
</dbReference>
<dbReference type="PIRSF" id="PIRSF000239">
    <property type="entry name" value="AHPC"/>
    <property type="match status" value="1"/>
</dbReference>
<dbReference type="SUPFAM" id="SSF52833">
    <property type="entry name" value="Thioredoxin-like"/>
    <property type="match status" value="1"/>
</dbReference>
<dbReference type="PROSITE" id="PS51352">
    <property type="entry name" value="THIOREDOXIN_2"/>
    <property type="match status" value="1"/>
</dbReference>
<proteinExistence type="evidence at protein level"/>
<accession>Q6B4U9</accession>
<sequence>MSSGNAKIGHPAPNFKATAVMPDGQFKDISLSDYKGKYVVFFFYPLDFTFVCPTEIIAFSDRAEEFKKINCQVIGASVDSHFCHLAWINTPKKQGGLGPMNIPLVSDPKRTIAQDYGVLKADEGISFRGLFIIDDKGILRQITVNDLPVGRSVDETLRLVQAFQFTDKHGEVCPAGWKPGSDTIKPDVQKSKEYFSKQK</sequence>
<name>PRDX1_MYOLU</name>